<reference key="1">
    <citation type="journal article" date="2011" name="J. Bacteriol.">
        <title>Genome sequence of the verrucomicrobium Opitutus terrae PB90-1, an abundant inhabitant of rice paddy soil ecosystems.</title>
        <authorList>
            <person name="van Passel M.W."/>
            <person name="Kant R."/>
            <person name="Palva A."/>
            <person name="Copeland A."/>
            <person name="Lucas S."/>
            <person name="Lapidus A."/>
            <person name="Glavina del Rio T."/>
            <person name="Pitluck S."/>
            <person name="Goltsman E."/>
            <person name="Clum A."/>
            <person name="Sun H."/>
            <person name="Schmutz J."/>
            <person name="Larimer F.W."/>
            <person name="Land M.L."/>
            <person name="Hauser L."/>
            <person name="Kyrpides N."/>
            <person name="Mikhailova N."/>
            <person name="Richardson P.P."/>
            <person name="Janssen P.H."/>
            <person name="de Vos W.M."/>
            <person name="Smidt H."/>
        </authorList>
    </citation>
    <scope>NUCLEOTIDE SEQUENCE [LARGE SCALE GENOMIC DNA]</scope>
    <source>
        <strain>DSM 11246 / JCM 15787 / PB90-1</strain>
    </source>
</reference>
<sequence>MAIHSFRPLTPAGRFTSLNKREGLSKKRPQKALTEPKPKTGGRNVYGRITTRHIGGGHKQLYRIIDFKRDILDMPATVEALEYDPNRTSNLALVVYANGEKKYILAPEGLQVGAKIFASNKATTNDYNVGNNFPLHLIPPSTRVHAVELVPGRGAKIARAAGTGLELVAVEGDRATLKMPSGELRLVNAKCRATIGEVGNGDHNNQSLGKAGRRRWLGVRPTVRGMVMNPVDHPNGGGQGKSKGGGGRQQLVSPWGQLAKGFPTRRRSKQSNAQIIVHHNGRKPRGKK</sequence>
<feature type="chain" id="PRO_1000141590" description="Large ribosomal subunit protein uL2">
    <location>
        <begin position="1"/>
        <end position="288"/>
    </location>
</feature>
<feature type="region of interest" description="Disordered" evidence="2">
    <location>
        <begin position="1"/>
        <end position="46"/>
    </location>
</feature>
<feature type="region of interest" description="Disordered" evidence="2">
    <location>
        <begin position="226"/>
        <end position="288"/>
    </location>
</feature>
<feature type="compositionally biased region" description="Gly residues" evidence="2">
    <location>
        <begin position="235"/>
        <end position="248"/>
    </location>
</feature>
<feature type="compositionally biased region" description="Basic residues" evidence="2">
    <location>
        <begin position="279"/>
        <end position="288"/>
    </location>
</feature>
<proteinExistence type="inferred from homology"/>
<evidence type="ECO:0000255" key="1">
    <source>
        <dbReference type="HAMAP-Rule" id="MF_01320"/>
    </source>
</evidence>
<evidence type="ECO:0000256" key="2">
    <source>
        <dbReference type="SAM" id="MobiDB-lite"/>
    </source>
</evidence>
<evidence type="ECO:0000305" key="3"/>
<dbReference type="EMBL" id="CP001032">
    <property type="protein sequence ID" value="ACB73514.1"/>
    <property type="molecule type" value="Genomic_DNA"/>
</dbReference>
<dbReference type="RefSeq" id="WP_012373052.1">
    <property type="nucleotide sequence ID" value="NC_010571.1"/>
</dbReference>
<dbReference type="SMR" id="B1ZNE5"/>
<dbReference type="STRING" id="452637.Oter_0223"/>
<dbReference type="KEGG" id="ote:Oter_0223"/>
<dbReference type="eggNOG" id="COG0090">
    <property type="taxonomic scope" value="Bacteria"/>
</dbReference>
<dbReference type="HOGENOM" id="CLU_036235_2_1_0"/>
<dbReference type="OrthoDB" id="9778722at2"/>
<dbReference type="Proteomes" id="UP000007013">
    <property type="component" value="Chromosome"/>
</dbReference>
<dbReference type="GO" id="GO:0015934">
    <property type="term" value="C:large ribosomal subunit"/>
    <property type="evidence" value="ECO:0007669"/>
    <property type="project" value="InterPro"/>
</dbReference>
<dbReference type="GO" id="GO:0019843">
    <property type="term" value="F:rRNA binding"/>
    <property type="evidence" value="ECO:0007669"/>
    <property type="project" value="UniProtKB-UniRule"/>
</dbReference>
<dbReference type="GO" id="GO:0003735">
    <property type="term" value="F:structural constituent of ribosome"/>
    <property type="evidence" value="ECO:0007669"/>
    <property type="project" value="InterPro"/>
</dbReference>
<dbReference type="GO" id="GO:0016740">
    <property type="term" value="F:transferase activity"/>
    <property type="evidence" value="ECO:0007669"/>
    <property type="project" value="InterPro"/>
</dbReference>
<dbReference type="GO" id="GO:0002181">
    <property type="term" value="P:cytoplasmic translation"/>
    <property type="evidence" value="ECO:0007669"/>
    <property type="project" value="TreeGrafter"/>
</dbReference>
<dbReference type="FunFam" id="2.30.30.30:FF:000001">
    <property type="entry name" value="50S ribosomal protein L2"/>
    <property type="match status" value="1"/>
</dbReference>
<dbReference type="FunFam" id="4.10.950.10:FF:000001">
    <property type="entry name" value="50S ribosomal protein L2"/>
    <property type="match status" value="1"/>
</dbReference>
<dbReference type="Gene3D" id="2.30.30.30">
    <property type="match status" value="1"/>
</dbReference>
<dbReference type="Gene3D" id="2.40.50.140">
    <property type="entry name" value="Nucleic acid-binding proteins"/>
    <property type="match status" value="1"/>
</dbReference>
<dbReference type="Gene3D" id="4.10.950.10">
    <property type="entry name" value="Ribosomal protein L2, domain 3"/>
    <property type="match status" value="1"/>
</dbReference>
<dbReference type="HAMAP" id="MF_01320_B">
    <property type="entry name" value="Ribosomal_uL2_B"/>
    <property type="match status" value="1"/>
</dbReference>
<dbReference type="InterPro" id="IPR012340">
    <property type="entry name" value="NA-bd_OB-fold"/>
</dbReference>
<dbReference type="InterPro" id="IPR014722">
    <property type="entry name" value="Rib_uL2_dom2"/>
</dbReference>
<dbReference type="InterPro" id="IPR002171">
    <property type="entry name" value="Ribosomal_uL2"/>
</dbReference>
<dbReference type="InterPro" id="IPR005880">
    <property type="entry name" value="Ribosomal_uL2_bac/org-type"/>
</dbReference>
<dbReference type="InterPro" id="IPR022669">
    <property type="entry name" value="Ribosomal_uL2_C"/>
</dbReference>
<dbReference type="InterPro" id="IPR014726">
    <property type="entry name" value="Ribosomal_uL2_dom3"/>
</dbReference>
<dbReference type="InterPro" id="IPR022666">
    <property type="entry name" value="Ribosomal_uL2_RNA-bd_dom"/>
</dbReference>
<dbReference type="InterPro" id="IPR008991">
    <property type="entry name" value="Translation_prot_SH3-like_sf"/>
</dbReference>
<dbReference type="NCBIfam" id="TIGR01171">
    <property type="entry name" value="rplB_bact"/>
    <property type="match status" value="1"/>
</dbReference>
<dbReference type="PANTHER" id="PTHR13691:SF5">
    <property type="entry name" value="LARGE RIBOSOMAL SUBUNIT PROTEIN UL2M"/>
    <property type="match status" value="1"/>
</dbReference>
<dbReference type="PANTHER" id="PTHR13691">
    <property type="entry name" value="RIBOSOMAL PROTEIN L2"/>
    <property type="match status" value="1"/>
</dbReference>
<dbReference type="Pfam" id="PF00181">
    <property type="entry name" value="Ribosomal_L2"/>
    <property type="match status" value="1"/>
</dbReference>
<dbReference type="Pfam" id="PF03947">
    <property type="entry name" value="Ribosomal_L2_C"/>
    <property type="match status" value="1"/>
</dbReference>
<dbReference type="PIRSF" id="PIRSF002158">
    <property type="entry name" value="Ribosomal_L2"/>
    <property type="match status" value="1"/>
</dbReference>
<dbReference type="SMART" id="SM01383">
    <property type="entry name" value="Ribosomal_L2"/>
    <property type="match status" value="1"/>
</dbReference>
<dbReference type="SMART" id="SM01382">
    <property type="entry name" value="Ribosomal_L2_C"/>
    <property type="match status" value="1"/>
</dbReference>
<dbReference type="SUPFAM" id="SSF50249">
    <property type="entry name" value="Nucleic acid-binding proteins"/>
    <property type="match status" value="1"/>
</dbReference>
<dbReference type="SUPFAM" id="SSF50104">
    <property type="entry name" value="Translation proteins SH3-like domain"/>
    <property type="match status" value="1"/>
</dbReference>
<keyword id="KW-1185">Reference proteome</keyword>
<keyword id="KW-0687">Ribonucleoprotein</keyword>
<keyword id="KW-0689">Ribosomal protein</keyword>
<keyword id="KW-0694">RNA-binding</keyword>
<keyword id="KW-0699">rRNA-binding</keyword>
<organism>
    <name type="scientific">Opitutus terrae (strain DSM 11246 / JCM 15787 / PB90-1)</name>
    <dbReference type="NCBI Taxonomy" id="452637"/>
    <lineage>
        <taxon>Bacteria</taxon>
        <taxon>Pseudomonadati</taxon>
        <taxon>Verrucomicrobiota</taxon>
        <taxon>Opitutia</taxon>
        <taxon>Opitutales</taxon>
        <taxon>Opitutaceae</taxon>
        <taxon>Opitutus</taxon>
    </lineage>
</organism>
<gene>
    <name evidence="1" type="primary">rplB</name>
    <name type="ordered locus">Oter_0223</name>
</gene>
<protein>
    <recommendedName>
        <fullName evidence="1">Large ribosomal subunit protein uL2</fullName>
    </recommendedName>
    <alternativeName>
        <fullName evidence="3">50S ribosomal protein L2</fullName>
    </alternativeName>
</protein>
<name>RL2_OPITP</name>
<comment type="function">
    <text evidence="1">One of the primary rRNA binding proteins. Required for association of the 30S and 50S subunits to form the 70S ribosome, for tRNA binding and peptide bond formation. It has been suggested to have peptidyltransferase activity; this is somewhat controversial. Makes several contacts with the 16S rRNA in the 70S ribosome.</text>
</comment>
<comment type="subunit">
    <text evidence="1">Part of the 50S ribosomal subunit. Forms a bridge to the 30S subunit in the 70S ribosome.</text>
</comment>
<comment type="similarity">
    <text evidence="1">Belongs to the universal ribosomal protein uL2 family.</text>
</comment>
<accession>B1ZNE5</accession>